<keyword id="KW-0067">ATP-binding</keyword>
<keyword id="KW-1003">Cell membrane</keyword>
<keyword id="KW-0418">Kinase</keyword>
<keyword id="KW-0472">Membrane</keyword>
<keyword id="KW-0547">Nucleotide-binding</keyword>
<keyword id="KW-0597">Phosphoprotein</keyword>
<keyword id="KW-0808">Transferase</keyword>
<keyword id="KW-0812">Transmembrane</keyword>
<keyword id="KW-1133">Transmembrane helix</keyword>
<keyword id="KW-0902">Two-component regulatory system</keyword>
<keyword id="KW-0843">Virulence</keyword>
<name>SAES_STAAW</name>
<comment type="function">
    <text evidence="1">Member of the two-component regulatory system SaeR/SaeS involved in the regulation of staphylococcal virulence factors in a strain-dependent fashion. Probably functions as a membrane-associated protein kinase that upon sensing the appropriate signal, autophosphorylates and in turn activates the cytosolic response regulator SaeR (By similarity).</text>
</comment>
<comment type="catalytic activity">
    <reaction>
        <text>ATP + protein L-histidine = ADP + protein N-phospho-L-histidine.</text>
        <dbReference type="EC" id="2.7.13.3"/>
    </reaction>
</comment>
<comment type="subcellular location">
    <subcellularLocation>
        <location evidence="1">Cell membrane</location>
        <topology evidence="1">Multi-pass membrane protein</topology>
    </subcellularLocation>
</comment>
<comment type="PTM">
    <text evidence="1">Autophosphorylated.</text>
</comment>
<proteinExistence type="inferred from homology"/>
<organism>
    <name type="scientific">Staphylococcus aureus (strain MW2)</name>
    <dbReference type="NCBI Taxonomy" id="196620"/>
    <lineage>
        <taxon>Bacteria</taxon>
        <taxon>Bacillati</taxon>
        <taxon>Bacillota</taxon>
        <taxon>Bacilli</taxon>
        <taxon>Bacillales</taxon>
        <taxon>Staphylococcaceae</taxon>
        <taxon>Staphylococcus</taxon>
    </lineage>
</organism>
<feature type="chain" id="PRO_0000295935" description="Histidine protein kinase SaeS">
    <location>
        <begin position="1"/>
        <end position="351"/>
    </location>
</feature>
<feature type="transmembrane region" description="Helical" evidence="2">
    <location>
        <begin position="9"/>
        <end position="29"/>
    </location>
</feature>
<feature type="transmembrane region" description="Helical" evidence="2">
    <location>
        <begin position="40"/>
        <end position="60"/>
    </location>
</feature>
<feature type="domain" description="HAMP" evidence="3">
    <location>
        <begin position="61"/>
        <end position="114"/>
    </location>
</feature>
<feature type="domain" description="Histidine kinase" evidence="4">
    <location>
        <begin position="129"/>
        <end position="348"/>
    </location>
</feature>
<feature type="modified residue" description="Phosphohistidine; by autocatalysis" evidence="4">
    <location>
        <position position="132"/>
    </location>
</feature>
<sequence length="351" mass="39714">MVLSIRSQIIIGVVSSILLTSTILAIAYILMWFNGHMTLTLTLTTIITSCLTLLICSIFINPLIQKIKQFNIKTKQFANGNYASNDKTFNSPKEIYELNQSFNKMASEITQQMNQIKSEQQEKTELIQNLAHDLKTPLASIISYSEGLRDGIITKDHEIKESYDILIKQANRLSTLFDDMTHIITLNTGKTYPPELIQLDQLLVSILQPYEQRIKHENRTLEVNFCSEIDAFYQYRTPLERILTNLLDNALKFSNVGSRIDINISENKDQDTIDIAISDEGIGIIPELQERIFERTFRVENSRNTKTGGSGLGLYIANELAQQNNAKISVSSDIDVGTTMTVTLHKLDITS</sequence>
<evidence type="ECO:0000250" key="1"/>
<evidence type="ECO:0000255" key="2"/>
<evidence type="ECO:0000255" key="3">
    <source>
        <dbReference type="PROSITE-ProRule" id="PRU00102"/>
    </source>
</evidence>
<evidence type="ECO:0000255" key="4">
    <source>
        <dbReference type="PROSITE-ProRule" id="PRU00107"/>
    </source>
</evidence>
<dbReference type="EC" id="2.7.13.3"/>
<dbReference type="EMBL" id="BA000033">
    <property type="protein sequence ID" value="BAB94532.1"/>
    <property type="molecule type" value="Genomic_DNA"/>
</dbReference>
<dbReference type="RefSeq" id="WP_000244415.1">
    <property type="nucleotide sequence ID" value="NC_003923.1"/>
</dbReference>
<dbReference type="SMR" id="Q7A1J2"/>
<dbReference type="KEGG" id="sam:MW0667"/>
<dbReference type="HOGENOM" id="CLU_000445_89_3_9"/>
<dbReference type="GO" id="GO:0005886">
    <property type="term" value="C:plasma membrane"/>
    <property type="evidence" value="ECO:0007669"/>
    <property type="project" value="UniProtKB-SubCell"/>
</dbReference>
<dbReference type="GO" id="GO:0005524">
    <property type="term" value="F:ATP binding"/>
    <property type="evidence" value="ECO:0007669"/>
    <property type="project" value="UniProtKB-KW"/>
</dbReference>
<dbReference type="GO" id="GO:0004721">
    <property type="term" value="F:phosphoprotein phosphatase activity"/>
    <property type="evidence" value="ECO:0007669"/>
    <property type="project" value="TreeGrafter"/>
</dbReference>
<dbReference type="GO" id="GO:0000155">
    <property type="term" value="F:phosphorelay sensor kinase activity"/>
    <property type="evidence" value="ECO:0007669"/>
    <property type="project" value="InterPro"/>
</dbReference>
<dbReference type="GO" id="GO:0016036">
    <property type="term" value="P:cellular response to phosphate starvation"/>
    <property type="evidence" value="ECO:0007669"/>
    <property type="project" value="TreeGrafter"/>
</dbReference>
<dbReference type="CDD" id="cd00075">
    <property type="entry name" value="HATPase"/>
    <property type="match status" value="1"/>
</dbReference>
<dbReference type="CDD" id="cd00082">
    <property type="entry name" value="HisKA"/>
    <property type="match status" value="1"/>
</dbReference>
<dbReference type="FunFam" id="1.10.287.130:FF:000077">
    <property type="entry name" value="Sensor histidine kinase SaeS"/>
    <property type="match status" value="1"/>
</dbReference>
<dbReference type="Gene3D" id="1.10.287.130">
    <property type="match status" value="1"/>
</dbReference>
<dbReference type="Gene3D" id="6.10.340.10">
    <property type="match status" value="1"/>
</dbReference>
<dbReference type="Gene3D" id="3.30.565.10">
    <property type="entry name" value="Histidine kinase-like ATPase, C-terminal domain"/>
    <property type="match status" value="1"/>
</dbReference>
<dbReference type="InterPro" id="IPR050351">
    <property type="entry name" value="2-comp_sensor_kinase"/>
</dbReference>
<dbReference type="InterPro" id="IPR003660">
    <property type="entry name" value="HAMP_dom"/>
</dbReference>
<dbReference type="InterPro" id="IPR036890">
    <property type="entry name" value="HATPase_C_sf"/>
</dbReference>
<dbReference type="InterPro" id="IPR005467">
    <property type="entry name" value="His_kinase_dom"/>
</dbReference>
<dbReference type="InterPro" id="IPR003661">
    <property type="entry name" value="HisK_dim/P_dom"/>
</dbReference>
<dbReference type="InterPro" id="IPR036097">
    <property type="entry name" value="HisK_dim/P_sf"/>
</dbReference>
<dbReference type="InterPro" id="IPR004358">
    <property type="entry name" value="Sig_transdc_His_kin-like_C"/>
</dbReference>
<dbReference type="PANTHER" id="PTHR45453">
    <property type="entry name" value="PHOSPHATE REGULON SENSOR PROTEIN PHOR"/>
    <property type="match status" value="1"/>
</dbReference>
<dbReference type="PANTHER" id="PTHR45453:SF1">
    <property type="entry name" value="PHOSPHATE REGULON SENSOR PROTEIN PHOR"/>
    <property type="match status" value="1"/>
</dbReference>
<dbReference type="Pfam" id="PF00672">
    <property type="entry name" value="HAMP"/>
    <property type="match status" value="1"/>
</dbReference>
<dbReference type="Pfam" id="PF02518">
    <property type="entry name" value="HATPase_c"/>
    <property type="match status" value="1"/>
</dbReference>
<dbReference type="Pfam" id="PF00512">
    <property type="entry name" value="HisKA"/>
    <property type="match status" value="1"/>
</dbReference>
<dbReference type="PRINTS" id="PR00344">
    <property type="entry name" value="BCTRLSENSOR"/>
</dbReference>
<dbReference type="SMART" id="SM00387">
    <property type="entry name" value="HATPase_c"/>
    <property type="match status" value="1"/>
</dbReference>
<dbReference type="SMART" id="SM00388">
    <property type="entry name" value="HisKA"/>
    <property type="match status" value="1"/>
</dbReference>
<dbReference type="SUPFAM" id="SSF55874">
    <property type="entry name" value="ATPase domain of HSP90 chaperone/DNA topoisomerase II/histidine kinase"/>
    <property type="match status" value="1"/>
</dbReference>
<dbReference type="SUPFAM" id="SSF47384">
    <property type="entry name" value="Homodimeric domain of signal transducing histidine kinase"/>
    <property type="match status" value="1"/>
</dbReference>
<dbReference type="PROSITE" id="PS50885">
    <property type="entry name" value="HAMP"/>
    <property type="match status" value="1"/>
</dbReference>
<dbReference type="PROSITE" id="PS50109">
    <property type="entry name" value="HIS_KIN"/>
    <property type="match status" value="1"/>
</dbReference>
<protein>
    <recommendedName>
        <fullName>Histidine protein kinase SaeS</fullName>
        <ecNumber>2.7.13.3</ecNumber>
    </recommendedName>
    <alternativeName>
        <fullName>Sensor protein SaeS</fullName>
    </alternativeName>
    <alternativeName>
        <fullName>Staphylococcus exoprotein expression protein S</fullName>
    </alternativeName>
</protein>
<reference key="1">
    <citation type="journal article" date="2002" name="Lancet">
        <title>Genome and virulence determinants of high virulence community-acquired MRSA.</title>
        <authorList>
            <person name="Baba T."/>
            <person name="Takeuchi F."/>
            <person name="Kuroda M."/>
            <person name="Yuzawa H."/>
            <person name="Aoki K."/>
            <person name="Oguchi A."/>
            <person name="Nagai Y."/>
            <person name="Iwama N."/>
            <person name="Asano K."/>
            <person name="Naimi T."/>
            <person name="Kuroda H."/>
            <person name="Cui L."/>
            <person name="Yamamoto K."/>
            <person name="Hiramatsu K."/>
        </authorList>
    </citation>
    <scope>NUCLEOTIDE SEQUENCE [LARGE SCALE GENOMIC DNA]</scope>
    <source>
        <strain>MW2</strain>
    </source>
</reference>
<accession>Q7A1J2</accession>
<gene>
    <name type="primary">saeS</name>
    <name type="ordered locus">MW0667</name>
</gene>